<gene>
    <name type="primary">NTE1</name>
    <name type="ORF">PGUG_02654</name>
</gene>
<sequence length="1438" mass="160000">MDSDTSSADFHSTETLVSTPKYSYGVLINVILLVSWTCFRVVNWFLVTLPSILLGMLSKTFQITLSLSSILMFVVAVTAICFLVVRYKYLTRYSRNSAAKEPAKKSFDIDDLSKKKKSSSKTSSNYLDQFLSAIQVFGYLEGPVFHELTRNMTTQKVLPNEVLYLDESLGFSIVVEGTMQVYTKVTNLSNSSLNAEDDGLDLRYENDDVLCIGNDKYQLLNEVKSGAPLSSLMSTLDLFTSNEVPLSPTKFGSYSLTAVTPLELSPNNTGGNSPPPSLAPEIVARPKGTTSTTLAIIPYTAFQRLHKKYPKATSHIVTMVLTRLYKVSMNTIYNYLGLSKDILDCERNLNAETNERLPSYLSKGIIEKFHKTEESASVEGSPTLPRRSTVNLRALTRQASSSRYVVLASRSKSTHPGDLLSSVPLSRRSDYYETQTIPNESEDSPTIQRSSLRRRASHSTSLRKSNSVLEDIRVRGFSNEREETEETSLRTAIVEQIFTHLGISEDDPTVMNINPTSASSSASSSIVGISKLNYGSLDSINSPRVDPMTSIRSSLASNGNKVYQTINQHTKEADVLQEKPKKVVLPGSRGDDSDFVAVKDEFARAIQMKYIQPGKTIIEQDSFHTGIFYVIDGSLDVIQESNGKSKKIYTVKAGGITGYLNCLIGMKSLVSVKASEDSSAIVAHIPSHMYSKLIDKFYFLQLPIARRLKRLLSKQFLTIDYALEWCHISAGDILSKEGEPANGFHIVLSGRFRVVKFKTPFKPVASKAGHDTYDYNDNLIDESNKKYTSNDVEILGEYGHGESIGEVEVLTASLRKNTLIAVRDSETARIPRALFELLSLQNPSIMVKVSRIVANRLSKKDSEEILDKPLAMTSSDSPYISSNFKTITILPTVSQLPVREFADKLVQALKAIGRNVIALDQASTLTHLGKHAFDERLAELKLSGYFAYLEEKYETIVYVCDTPVKSNWTSTCISQGDCILLLADADDEDTAESIGSYERLLIKLKTTARTDLCLIHPEKYVTPGSTSIWLKNRVWVQGHHHIQMEISPTQTTSVMKPKIPIISELAKKIKDRANPNIKLKLEEVKGKALASFVKLNNKINAHGRMSFNGVSVHKNDFLRLARILSNEAVGLVLGGGGSRGISHVGVVIALEKHGIPIDLVGGTSIGSFVGGLYAMDYNTVSIYGRAKKFAKRVSSFWRILTDLTYPVTSYMTGYEFNRGIWKIFGFTEIEDFWLRYFCNSTNITNSTMDIHETGYSWRFIRASMSLAGLLPPITYNGSMLLDGGYLDNLPVSEMKKKGAKYIIAVDVGSVDDRTPMNYGDTLSGFWVLLNRWNPFSKHPDVPNMMDIQLRLAYVASVNALEISKKTPGVMYLRPPIENYATLDFAKYDEIYRVGYVYADELFTSWKSSGKLPDIAGMGDKVRKDMSGEHVSLSRRNSI</sequence>
<name>NTE1_PICGU</name>
<proteinExistence type="inferred from homology"/>
<reference key="1">
    <citation type="journal article" date="2009" name="Nature">
        <title>Evolution of pathogenicity and sexual reproduction in eight Candida genomes.</title>
        <authorList>
            <person name="Butler G."/>
            <person name="Rasmussen M.D."/>
            <person name="Lin M.F."/>
            <person name="Santos M.A.S."/>
            <person name="Sakthikumar S."/>
            <person name="Munro C.A."/>
            <person name="Rheinbay E."/>
            <person name="Grabherr M."/>
            <person name="Forche A."/>
            <person name="Reedy J.L."/>
            <person name="Agrafioti I."/>
            <person name="Arnaud M.B."/>
            <person name="Bates S."/>
            <person name="Brown A.J.P."/>
            <person name="Brunke S."/>
            <person name="Costanzo M.C."/>
            <person name="Fitzpatrick D.A."/>
            <person name="de Groot P.W.J."/>
            <person name="Harris D."/>
            <person name="Hoyer L.L."/>
            <person name="Hube B."/>
            <person name="Klis F.M."/>
            <person name="Kodira C."/>
            <person name="Lennard N."/>
            <person name="Logue M.E."/>
            <person name="Martin R."/>
            <person name="Neiman A.M."/>
            <person name="Nikolaou E."/>
            <person name="Quail M.A."/>
            <person name="Quinn J."/>
            <person name="Santos M.C."/>
            <person name="Schmitzberger F.F."/>
            <person name="Sherlock G."/>
            <person name="Shah P."/>
            <person name="Silverstein K.A.T."/>
            <person name="Skrzypek M.S."/>
            <person name="Soll D."/>
            <person name="Staggs R."/>
            <person name="Stansfield I."/>
            <person name="Stumpf M.P.H."/>
            <person name="Sudbery P.E."/>
            <person name="Srikantha T."/>
            <person name="Zeng Q."/>
            <person name="Berman J."/>
            <person name="Berriman M."/>
            <person name="Heitman J."/>
            <person name="Gow N.A.R."/>
            <person name="Lorenz M.C."/>
            <person name="Birren B.W."/>
            <person name="Kellis M."/>
            <person name="Cuomo C.A."/>
        </authorList>
    </citation>
    <scope>NUCLEOTIDE SEQUENCE [LARGE SCALE GENOMIC DNA]</scope>
    <source>
        <strain>ATCC 6260 / CBS 566 / DSM 6381 / JCM 1539 / NBRC 10279 / NRRL Y-324</strain>
    </source>
</reference>
<comment type="function">
    <text evidence="1">Intracellular phospholipase B that catalyzes the double deacylation of phosphatidylcholine (PC) to glycerophosphocholine (GroPCho). Plays an important role in membrane lipid homeostasis. Responsible for the rapid PC turnover in response to inositol, elevated temperatures, or when choline is present in the growth medium (By similarity).</text>
</comment>
<comment type="catalytic activity">
    <reaction>
        <text>a 1-acyl-sn-glycero-3-phosphocholine + H2O = sn-glycerol 3-phosphocholine + a fatty acid + H(+)</text>
        <dbReference type="Rhea" id="RHEA:15177"/>
        <dbReference type="ChEBI" id="CHEBI:15377"/>
        <dbReference type="ChEBI" id="CHEBI:15378"/>
        <dbReference type="ChEBI" id="CHEBI:16870"/>
        <dbReference type="ChEBI" id="CHEBI:28868"/>
        <dbReference type="ChEBI" id="CHEBI:58168"/>
        <dbReference type="EC" id="3.1.1.5"/>
    </reaction>
</comment>
<comment type="activity regulation">
    <text evidence="1">Inhibited by organophosphorus esters.</text>
</comment>
<comment type="subcellular location">
    <subcellularLocation>
        <location evidence="1">Endoplasmic reticulum membrane</location>
        <topology evidence="1">Multi-pass membrane protein</topology>
    </subcellularLocation>
</comment>
<comment type="similarity">
    <text evidence="5">Belongs to the NTE family.</text>
</comment>
<dbReference type="EC" id="3.1.1.5"/>
<dbReference type="EMBL" id="CH408157">
    <property type="protein sequence ID" value="EDK38556.2"/>
    <property type="molecule type" value="Genomic_DNA"/>
</dbReference>
<dbReference type="RefSeq" id="XP_001484925.1">
    <property type="nucleotide sequence ID" value="XM_001484875.1"/>
</dbReference>
<dbReference type="SMR" id="A5DHA3"/>
<dbReference type="FunCoup" id="A5DHA3">
    <property type="interactions" value="113"/>
</dbReference>
<dbReference type="STRING" id="294746.A5DHA3"/>
<dbReference type="GeneID" id="5127010"/>
<dbReference type="KEGG" id="pgu:PGUG_02654"/>
<dbReference type="VEuPathDB" id="FungiDB:PGUG_02654"/>
<dbReference type="eggNOG" id="KOG2968">
    <property type="taxonomic scope" value="Eukaryota"/>
</dbReference>
<dbReference type="HOGENOM" id="CLU_000960_1_1_1"/>
<dbReference type="InParanoid" id="A5DHA3"/>
<dbReference type="OMA" id="SSGYVWR"/>
<dbReference type="OrthoDB" id="421051at2759"/>
<dbReference type="Proteomes" id="UP000001997">
    <property type="component" value="Unassembled WGS sequence"/>
</dbReference>
<dbReference type="GO" id="GO:0005789">
    <property type="term" value="C:endoplasmic reticulum membrane"/>
    <property type="evidence" value="ECO:0007669"/>
    <property type="project" value="UniProtKB-SubCell"/>
</dbReference>
<dbReference type="GO" id="GO:0004622">
    <property type="term" value="F:lysophospholipase activity"/>
    <property type="evidence" value="ECO:0007669"/>
    <property type="project" value="UniProtKB-EC"/>
</dbReference>
<dbReference type="GO" id="GO:0046486">
    <property type="term" value="P:glycerolipid metabolic process"/>
    <property type="evidence" value="ECO:0007669"/>
    <property type="project" value="UniProtKB-ARBA"/>
</dbReference>
<dbReference type="GO" id="GO:0016042">
    <property type="term" value="P:lipid catabolic process"/>
    <property type="evidence" value="ECO:0007669"/>
    <property type="project" value="UniProtKB-KW"/>
</dbReference>
<dbReference type="CDD" id="cd00038">
    <property type="entry name" value="CAP_ED"/>
    <property type="match status" value="2"/>
</dbReference>
<dbReference type="FunFam" id="3.40.1090.10:FF:000007">
    <property type="entry name" value="Lysophospholipase NTE1"/>
    <property type="match status" value="1"/>
</dbReference>
<dbReference type="FunFam" id="3.40.1090.10:FF:000013">
    <property type="entry name" value="Lysophospholipase NTE1"/>
    <property type="match status" value="1"/>
</dbReference>
<dbReference type="Gene3D" id="3.40.1090.10">
    <property type="entry name" value="Cytosolic phospholipase A2 catalytic domain"/>
    <property type="match status" value="2"/>
</dbReference>
<dbReference type="Gene3D" id="2.60.120.10">
    <property type="entry name" value="Jelly Rolls"/>
    <property type="match status" value="3"/>
</dbReference>
<dbReference type="InterPro" id="IPR016035">
    <property type="entry name" value="Acyl_Trfase/lysoPLipase"/>
</dbReference>
<dbReference type="InterPro" id="IPR000595">
    <property type="entry name" value="cNMP-bd_dom"/>
</dbReference>
<dbReference type="InterPro" id="IPR018490">
    <property type="entry name" value="cNMP-bd_dom_sf"/>
</dbReference>
<dbReference type="InterPro" id="IPR050301">
    <property type="entry name" value="NTE"/>
</dbReference>
<dbReference type="InterPro" id="IPR056556">
    <property type="entry name" value="NTE1_P-loop_dom"/>
</dbReference>
<dbReference type="InterPro" id="IPR002641">
    <property type="entry name" value="PNPLA_dom"/>
</dbReference>
<dbReference type="InterPro" id="IPR014710">
    <property type="entry name" value="RmlC-like_jellyroll"/>
</dbReference>
<dbReference type="PANTHER" id="PTHR14226:SF29">
    <property type="entry name" value="NEUROPATHY TARGET ESTERASE SWS"/>
    <property type="match status" value="1"/>
</dbReference>
<dbReference type="PANTHER" id="PTHR14226">
    <property type="entry name" value="NEUROPATHY TARGET ESTERASE/SWISS CHEESE D.MELANOGASTER"/>
    <property type="match status" value="1"/>
</dbReference>
<dbReference type="Pfam" id="PF00027">
    <property type="entry name" value="cNMP_binding"/>
    <property type="match status" value="1"/>
</dbReference>
<dbReference type="Pfam" id="PF24179">
    <property type="entry name" value="NTE_Ploop"/>
    <property type="match status" value="1"/>
</dbReference>
<dbReference type="Pfam" id="PF01734">
    <property type="entry name" value="Patatin"/>
    <property type="match status" value="1"/>
</dbReference>
<dbReference type="SUPFAM" id="SSF51206">
    <property type="entry name" value="cAMP-binding domain-like"/>
    <property type="match status" value="3"/>
</dbReference>
<dbReference type="SUPFAM" id="SSF52151">
    <property type="entry name" value="FabD/lysophospholipase-like"/>
    <property type="match status" value="1"/>
</dbReference>
<dbReference type="PROSITE" id="PS50042">
    <property type="entry name" value="CNMP_BINDING_3"/>
    <property type="match status" value="2"/>
</dbReference>
<dbReference type="PROSITE" id="PS51635">
    <property type="entry name" value="PNPLA"/>
    <property type="match status" value="1"/>
</dbReference>
<keyword id="KW-0256">Endoplasmic reticulum</keyword>
<keyword id="KW-0378">Hydrolase</keyword>
<keyword id="KW-0442">Lipid degradation</keyword>
<keyword id="KW-0443">Lipid metabolism</keyword>
<keyword id="KW-0472">Membrane</keyword>
<keyword id="KW-1185">Reference proteome</keyword>
<keyword id="KW-0677">Repeat</keyword>
<keyword id="KW-0812">Transmembrane</keyword>
<keyword id="KW-1133">Transmembrane helix</keyword>
<protein>
    <recommendedName>
        <fullName>Lysophospholipase NTE1</fullName>
        <ecNumber>3.1.1.5</ecNumber>
    </recommendedName>
    <alternativeName>
        <fullName>Intracellular phospholipase B</fullName>
    </alternativeName>
    <alternativeName>
        <fullName>Neuropathy target esterase homolog</fullName>
    </alternativeName>
</protein>
<accession>A5DHA3</accession>
<feature type="chain" id="PRO_0000295328" description="Lysophospholipase NTE1">
    <location>
        <begin position="1"/>
        <end position="1438"/>
    </location>
</feature>
<feature type="topological domain" description="Cytoplasmic" evidence="1">
    <location>
        <begin position="1"/>
        <end position="25"/>
    </location>
</feature>
<feature type="transmembrane region" description="Helical" evidence="2">
    <location>
        <begin position="26"/>
        <end position="46"/>
    </location>
</feature>
<feature type="topological domain" description="Lumenal" evidence="1">
    <location>
        <begin position="47"/>
        <end position="64"/>
    </location>
</feature>
<feature type="transmembrane region" description="Helical" evidence="2">
    <location>
        <begin position="65"/>
        <end position="85"/>
    </location>
</feature>
<feature type="topological domain" description="Cytoplasmic" evidence="1">
    <location>
        <begin position="86"/>
        <end position="1438"/>
    </location>
</feature>
<feature type="domain" description="PNPLA" evidence="3">
    <location>
        <begin position="1131"/>
        <end position="1295"/>
    </location>
</feature>
<feature type="region of interest" description="Disordered" evidence="4">
    <location>
        <begin position="432"/>
        <end position="464"/>
    </location>
</feature>
<feature type="short sequence motif" description="GXGXXG" evidence="3">
    <location>
        <begin position="1135"/>
        <end position="1140"/>
    </location>
</feature>
<feature type="short sequence motif" description="GXSXG" evidence="3">
    <location>
        <begin position="1162"/>
        <end position="1166"/>
    </location>
</feature>
<feature type="short sequence motif" description="DGA/G" evidence="3">
    <location>
        <begin position="1282"/>
        <end position="1284"/>
    </location>
</feature>
<feature type="compositionally biased region" description="Polar residues" evidence="4">
    <location>
        <begin position="432"/>
        <end position="450"/>
    </location>
</feature>
<feature type="active site" description="Nucleophile" evidence="3">
    <location>
        <position position="1164"/>
    </location>
</feature>
<feature type="active site" description="Proton acceptor" evidence="3">
    <location>
        <position position="1282"/>
    </location>
</feature>
<feature type="binding site">
    <location>
        <begin position="590"/>
        <end position="720"/>
    </location>
    <ligand>
        <name>a nucleoside 3',5'-cyclic phosphate</name>
        <dbReference type="ChEBI" id="CHEBI:58464"/>
        <label>1</label>
    </ligand>
</feature>
<feature type="binding site">
    <location>
        <begin position="707"/>
        <end position="856"/>
    </location>
    <ligand>
        <name>a nucleoside 3',5'-cyclic phosphate</name>
        <dbReference type="ChEBI" id="CHEBI:58464"/>
        <label>2</label>
    </ligand>
</feature>
<evidence type="ECO:0000250" key="1"/>
<evidence type="ECO:0000255" key="2"/>
<evidence type="ECO:0000255" key="3">
    <source>
        <dbReference type="PROSITE-ProRule" id="PRU01161"/>
    </source>
</evidence>
<evidence type="ECO:0000256" key="4">
    <source>
        <dbReference type="SAM" id="MobiDB-lite"/>
    </source>
</evidence>
<evidence type="ECO:0000305" key="5"/>
<organism>
    <name type="scientific">Meyerozyma guilliermondii (strain ATCC 6260 / CBS 566 / DSM 6381 / JCM 1539 / NBRC 10279 / NRRL Y-324)</name>
    <name type="common">Yeast</name>
    <name type="synonym">Candida guilliermondii</name>
    <dbReference type="NCBI Taxonomy" id="294746"/>
    <lineage>
        <taxon>Eukaryota</taxon>
        <taxon>Fungi</taxon>
        <taxon>Dikarya</taxon>
        <taxon>Ascomycota</taxon>
        <taxon>Saccharomycotina</taxon>
        <taxon>Pichiomycetes</taxon>
        <taxon>Debaryomycetaceae</taxon>
        <taxon>Meyerozyma</taxon>
    </lineage>
</organism>